<feature type="chain" id="PRO_0000348967" description="Heme A synthase">
    <location>
        <begin position="1"/>
        <end position="311"/>
    </location>
</feature>
<feature type="topological domain" description="Cytoplasmic" evidence="1">
    <location>
        <begin position="1"/>
        <end position="6"/>
    </location>
</feature>
<feature type="transmembrane region" description="Helical" evidence="1">
    <location>
        <begin position="7"/>
        <end position="27"/>
    </location>
</feature>
<feature type="topological domain" description="Extracellular" evidence="1">
    <location>
        <begin position="28"/>
        <end position="62"/>
    </location>
</feature>
<feature type="transmembrane region" description="Helical" evidence="1">
    <location>
        <begin position="63"/>
        <end position="83"/>
    </location>
</feature>
<feature type="topological domain" description="Cytoplasmic" evidence="1">
    <location>
        <begin position="84"/>
        <end position="91"/>
    </location>
</feature>
<feature type="transmembrane region" description="Helical" evidence="1">
    <location>
        <begin position="92"/>
        <end position="112"/>
    </location>
</feature>
<feature type="topological domain" description="Extracellular" evidence="1">
    <location>
        <begin position="113"/>
        <end position="121"/>
    </location>
</feature>
<feature type="transmembrane region" description="Helical" evidence="1">
    <location>
        <begin position="122"/>
        <end position="142"/>
    </location>
</feature>
<feature type="topological domain" description="Cytoplasmic" evidence="1">
    <location>
        <begin position="143"/>
        <end position="159"/>
    </location>
</feature>
<feature type="transmembrane region" description="Helical" evidence="1">
    <location>
        <begin position="160"/>
        <end position="180"/>
    </location>
</feature>
<feature type="topological domain" description="Extracellular" evidence="1">
    <location>
        <begin position="181"/>
        <end position="211"/>
    </location>
</feature>
<feature type="transmembrane region" description="Helical" evidence="1">
    <location>
        <begin position="212"/>
        <end position="232"/>
    </location>
</feature>
<feature type="topological domain" description="Cytoplasmic" evidence="1">
    <location>
        <begin position="233"/>
        <end position="243"/>
    </location>
</feature>
<feature type="transmembrane region" description="Helical" evidence="1">
    <location>
        <begin position="244"/>
        <end position="264"/>
    </location>
</feature>
<feature type="topological domain" description="Extracellular" evidence="1">
    <location>
        <begin position="265"/>
        <end position="271"/>
    </location>
</feature>
<feature type="transmembrane region" description="Helical" evidence="1">
    <location>
        <begin position="272"/>
        <end position="292"/>
    </location>
</feature>
<feature type="topological domain" description="Cytoplasmic" evidence="1">
    <location>
        <begin position="293"/>
        <end position="311"/>
    </location>
</feature>
<feature type="active site" evidence="1">
    <location>
        <position position="58"/>
    </location>
</feature>
<feature type="binding site" description="axial binding residue" evidence="1">
    <location>
        <position position="61"/>
    </location>
    <ligand>
        <name>heme o</name>
        <dbReference type="ChEBI" id="CHEBI:24480"/>
    </ligand>
    <ligandPart>
        <name>Fe</name>
        <dbReference type="ChEBI" id="CHEBI:18248"/>
    </ligandPart>
</feature>
<feature type="binding site" description="axial binding residue" evidence="1">
    <location>
        <position position="123"/>
    </location>
    <ligand>
        <name>heme o</name>
        <dbReference type="ChEBI" id="CHEBI:24480"/>
    </ligand>
    <ligandPart>
        <name>Fe</name>
        <dbReference type="ChEBI" id="CHEBI:18248"/>
    </ligandPart>
</feature>
<feature type="binding site" description="axial binding residue" evidence="1">
    <location>
        <position position="213"/>
    </location>
    <ligand>
        <name>heme b</name>
        <dbReference type="ChEBI" id="CHEBI:60344"/>
    </ligand>
    <ligandPart>
        <name>Fe</name>
        <dbReference type="ChEBI" id="CHEBI:18248"/>
    </ligandPart>
</feature>
<feature type="binding site" description="axial binding residue" evidence="1">
    <location>
        <position position="275"/>
    </location>
    <ligand>
        <name>heme b</name>
        <dbReference type="ChEBI" id="CHEBI:60344"/>
    </ligand>
    <ligandPart>
        <name>Fe</name>
        <dbReference type="ChEBI" id="CHEBI:18248"/>
    </ligandPart>
</feature>
<feature type="disulfide bond" description="Essential for catalytic activity" evidence="1">
    <location>
        <begin position="35"/>
        <end position="42"/>
    </location>
</feature>
<feature type="disulfide bond" evidence="1">
    <location>
        <begin position="189"/>
        <end position="195"/>
    </location>
</feature>
<feature type="sequence conflict" description="In Ref. 1; CAB40605." evidence="3" ref="1">
    <original>V</original>
    <variation>D</variation>
    <location>
        <position position="252"/>
    </location>
</feature>
<evidence type="ECO:0000255" key="1">
    <source>
        <dbReference type="HAMAP-Rule" id="MF_01664"/>
    </source>
</evidence>
<evidence type="ECO:0000303" key="2">
    <source>
    </source>
</evidence>
<evidence type="ECO:0000305" key="3"/>
<name>CTAA_BACC1</name>
<reference key="1">
    <citation type="journal article" date="1999" name="Microbiology">
        <title>Genome organization is not conserved between Bacillus cereus and Bacillus subtilis.</title>
        <authorList>
            <person name="Oekstad O.A."/>
            <person name="Hegna I.K."/>
            <person name="Lindbaeck T."/>
            <person name="Rishovd A.-L."/>
            <person name="Kolstoe A.-B."/>
        </authorList>
    </citation>
    <scope>NUCLEOTIDE SEQUENCE [GENOMIC DNA]</scope>
    <source>
        <strain>ATCC 10987 / NRS 248</strain>
    </source>
</reference>
<reference key="2">
    <citation type="journal article" date="2004" name="Nucleic Acids Res.">
        <title>The genome sequence of Bacillus cereus ATCC 10987 reveals metabolic adaptations and a large plasmid related to Bacillus anthracis pXO1.</title>
        <authorList>
            <person name="Rasko D.A."/>
            <person name="Ravel J."/>
            <person name="Oekstad O.A."/>
            <person name="Helgason E."/>
            <person name="Cer R.Z."/>
            <person name="Jiang L."/>
            <person name="Shores K.A."/>
            <person name="Fouts D.E."/>
            <person name="Tourasse N.J."/>
            <person name="Angiuoli S.V."/>
            <person name="Kolonay J.F."/>
            <person name="Nelson W.C."/>
            <person name="Kolstoe A.-B."/>
            <person name="Fraser C.M."/>
            <person name="Read T.D."/>
        </authorList>
    </citation>
    <scope>NUCLEOTIDE SEQUENCE [LARGE SCALE GENOMIC DNA]</scope>
    <source>
        <strain>ATCC 10987 / NRS 248</strain>
    </source>
</reference>
<accession>Q732C1</accession>
<accession>Q9XBJ0</accession>
<comment type="function">
    <text evidence="1">Catalyzes the conversion of heme O to heme A by two successive hydroxylations of the methyl group at C8. The first hydroxylation forms heme I, the second hydroxylation results in an unstable dihydroxymethyl group, which spontaneously dehydrates, resulting in the formyl group of heme A.</text>
</comment>
<comment type="catalytic activity">
    <reaction evidence="1">
        <text>Fe(II)-heme o + 2 A + H2O = Fe(II)-heme a + 2 AH2</text>
        <dbReference type="Rhea" id="RHEA:63388"/>
        <dbReference type="ChEBI" id="CHEBI:13193"/>
        <dbReference type="ChEBI" id="CHEBI:15377"/>
        <dbReference type="ChEBI" id="CHEBI:17499"/>
        <dbReference type="ChEBI" id="CHEBI:60530"/>
        <dbReference type="ChEBI" id="CHEBI:61715"/>
        <dbReference type="EC" id="1.17.99.9"/>
    </reaction>
    <physiologicalReaction direction="left-to-right" evidence="1">
        <dbReference type="Rhea" id="RHEA:63389"/>
    </physiologicalReaction>
</comment>
<comment type="cofactor">
    <cofactor evidence="1">
        <name>heme b</name>
        <dbReference type="ChEBI" id="CHEBI:60344"/>
    </cofactor>
</comment>
<comment type="pathway">
    <text evidence="1">Porphyrin-containing compound metabolism; heme A biosynthesis; heme A from heme O: step 1/1.</text>
</comment>
<comment type="subunit">
    <text evidence="1">Interacts with CtaB.</text>
</comment>
<comment type="subcellular location">
    <subcellularLocation>
        <location evidence="1">Cell membrane</location>
        <topology evidence="1">Multi-pass membrane protein</topology>
    </subcellularLocation>
</comment>
<comment type="domain">
    <text evidence="1">The N-half (TM1-TM4) and C-half (TM5-TM8) domains are connected by an intracellular loop. Each domain is formed from four-helix bundles and they align in a pseudo twofold symmetry manner. The N-half domain is the substrate-heme O binding domain and the C-half domain is the cofactor heme B binding domain.</text>
</comment>
<comment type="domain">
    <text evidence="1">The cysteines of disulfide bond Cys-35 and Cys-42 may be involved in transfer of reducing equivalents from quinol in the membrane to the active site of the enzyme.</text>
</comment>
<comment type="similarity">
    <text evidence="1">Belongs to the COX15/CtaA family. Type 1 subfamily.</text>
</comment>
<organism>
    <name type="scientific">Bacillus cereus (strain ATCC 10987 / NRS 248)</name>
    <dbReference type="NCBI Taxonomy" id="222523"/>
    <lineage>
        <taxon>Bacteria</taxon>
        <taxon>Bacillati</taxon>
        <taxon>Bacillota</taxon>
        <taxon>Bacilli</taxon>
        <taxon>Bacillales</taxon>
        <taxon>Bacillaceae</taxon>
        <taxon>Bacillus</taxon>
        <taxon>Bacillus cereus group</taxon>
    </lineage>
</organism>
<gene>
    <name evidence="1 2" type="primary">ctaA</name>
    <name type="ordered locus">BCE_3993</name>
</gene>
<protein>
    <recommendedName>
        <fullName evidence="1">Heme A synthase</fullName>
        <shortName evidence="1">HAS</shortName>
        <ecNumber evidence="1">1.17.99.9</ecNumber>
    </recommendedName>
    <alternativeName>
        <fullName evidence="1">Cytochrome aa3-controlling protein</fullName>
    </alternativeName>
</protein>
<sequence length="311" mass="34583">MQRFIKWLAVITSLDLLIVLLGGALVTKTGSGQGCGKSWPLCNGEFVPSNLSMETIIELSHRLTSGSAGILVTLLCILSWKYYKHVRETKTLAILSFVFLVAQALMGAAAVVWGQMPAVLAIHFGISLISFASVILLTCLIFEIDQKFDARSLIMDKKMKFHIYGVTIYSYIVVYTGALVRHERASLACPDFPLCSKNRPMPTQLHEWVQMGHRVAAMLIFAWILYAMILAIRHYKQQPVVYWGWIISFILVTLQAIVGILVVFTNASLSMALLHSLFISCLFAVLCYLVMLGTRSKVNAKEAASTSKQTK</sequence>
<proteinExistence type="inferred from homology"/>
<dbReference type="EC" id="1.17.99.9" evidence="1"/>
<dbReference type="EMBL" id="AJ010111">
    <property type="protein sequence ID" value="CAB40605.1"/>
    <property type="molecule type" value="Genomic_DNA"/>
</dbReference>
<dbReference type="EMBL" id="AE017194">
    <property type="protein sequence ID" value="AAS42896.1"/>
    <property type="molecule type" value="Genomic_DNA"/>
</dbReference>
<dbReference type="PIR" id="T44610">
    <property type="entry name" value="T44610"/>
</dbReference>
<dbReference type="SMR" id="Q732C1"/>
<dbReference type="KEGG" id="bca:BCE_3993"/>
<dbReference type="HOGENOM" id="CLU_041525_3_1_9"/>
<dbReference type="UniPathway" id="UPA00269">
    <property type="reaction ID" value="UER00713"/>
</dbReference>
<dbReference type="Proteomes" id="UP000002527">
    <property type="component" value="Chromosome"/>
</dbReference>
<dbReference type="GO" id="GO:0005886">
    <property type="term" value="C:plasma membrane"/>
    <property type="evidence" value="ECO:0007669"/>
    <property type="project" value="UniProtKB-SubCell"/>
</dbReference>
<dbReference type="GO" id="GO:0046872">
    <property type="term" value="F:metal ion binding"/>
    <property type="evidence" value="ECO:0007669"/>
    <property type="project" value="UniProtKB-KW"/>
</dbReference>
<dbReference type="GO" id="GO:0016653">
    <property type="term" value="F:oxidoreductase activity, acting on NAD(P)H, heme protein as acceptor"/>
    <property type="evidence" value="ECO:0007669"/>
    <property type="project" value="InterPro"/>
</dbReference>
<dbReference type="GO" id="GO:0006784">
    <property type="term" value="P:heme A biosynthetic process"/>
    <property type="evidence" value="ECO:0007669"/>
    <property type="project" value="UniProtKB-UniRule"/>
</dbReference>
<dbReference type="HAMAP" id="MF_01664">
    <property type="entry name" value="HemeA_synth_type1"/>
    <property type="match status" value="1"/>
</dbReference>
<dbReference type="InterPro" id="IPR003780">
    <property type="entry name" value="COX15/CtaA_fam"/>
</dbReference>
<dbReference type="InterPro" id="IPR050450">
    <property type="entry name" value="COX15/CtaA_HemeA_synthase"/>
</dbReference>
<dbReference type="InterPro" id="IPR023755">
    <property type="entry name" value="HemeA_Synthase_type1"/>
</dbReference>
<dbReference type="PANTHER" id="PTHR35457">
    <property type="entry name" value="HEME A SYNTHASE"/>
    <property type="match status" value="1"/>
</dbReference>
<dbReference type="PANTHER" id="PTHR35457:SF1">
    <property type="entry name" value="HEME A SYNTHASE"/>
    <property type="match status" value="1"/>
</dbReference>
<dbReference type="Pfam" id="PF02628">
    <property type="entry name" value="COX15-CtaA"/>
    <property type="match status" value="1"/>
</dbReference>
<keyword id="KW-1003">Cell membrane</keyword>
<keyword id="KW-1015">Disulfide bond</keyword>
<keyword id="KW-0350">Heme biosynthesis</keyword>
<keyword id="KW-0408">Iron</keyword>
<keyword id="KW-0472">Membrane</keyword>
<keyword id="KW-0479">Metal-binding</keyword>
<keyword id="KW-0560">Oxidoreductase</keyword>
<keyword id="KW-0812">Transmembrane</keyword>
<keyword id="KW-1133">Transmembrane helix</keyword>